<accession>Q5M553</accession>
<sequence>MRNIYDLANELERGIRALPEYKNLVEKKEAIATDAEASALFKEFTDFQEDFYAKMQAGTMPTAEEQAAVQELGQKVEANALLKEYLTAQQSLSVYLNDIERIIFKPLQELNN</sequence>
<evidence type="ECO:0000255" key="1">
    <source>
        <dbReference type="HAMAP-Rule" id="MF_01526"/>
    </source>
</evidence>
<comment type="similarity">
    <text evidence="1">Belongs to the UPF0342 family.</text>
</comment>
<keyword id="KW-1185">Reference proteome</keyword>
<reference key="1">
    <citation type="journal article" date="2004" name="Nat. Biotechnol.">
        <title>Complete sequence and comparative genome analysis of the dairy bacterium Streptococcus thermophilus.</title>
        <authorList>
            <person name="Bolotin A."/>
            <person name="Quinquis B."/>
            <person name="Renault P."/>
            <person name="Sorokin A."/>
            <person name="Ehrlich S.D."/>
            <person name="Kulakauskas S."/>
            <person name="Lapidus A."/>
            <person name="Goltsman E."/>
            <person name="Mazur M."/>
            <person name="Pusch G.D."/>
            <person name="Fonstein M."/>
            <person name="Overbeek R."/>
            <person name="Kyprides N."/>
            <person name="Purnelle B."/>
            <person name="Prozzi D."/>
            <person name="Ngui K."/>
            <person name="Masuy D."/>
            <person name="Hancy F."/>
            <person name="Burteau S."/>
            <person name="Boutry M."/>
            <person name="Delcour J."/>
            <person name="Goffeau A."/>
            <person name="Hols P."/>
        </authorList>
    </citation>
    <scope>NUCLEOTIDE SEQUENCE [LARGE SCALE GENOMIC DNA]</scope>
    <source>
        <strain>ATCC BAA-250 / LMG 18311</strain>
    </source>
</reference>
<organism>
    <name type="scientific">Streptococcus thermophilus (strain ATCC BAA-250 / LMG 18311)</name>
    <dbReference type="NCBI Taxonomy" id="264199"/>
    <lineage>
        <taxon>Bacteria</taxon>
        <taxon>Bacillati</taxon>
        <taxon>Bacillota</taxon>
        <taxon>Bacilli</taxon>
        <taxon>Lactobacillales</taxon>
        <taxon>Streptococcaceae</taxon>
        <taxon>Streptococcus</taxon>
    </lineage>
</organism>
<name>Y643_STRT2</name>
<proteinExistence type="inferred from homology"/>
<feature type="chain" id="PRO_0000110001" description="UPF0342 protein stu0643">
    <location>
        <begin position="1"/>
        <end position="112"/>
    </location>
</feature>
<protein>
    <recommendedName>
        <fullName evidence="1">UPF0342 protein stu0643</fullName>
    </recommendedName>
</protein>
<gene>
    <name type="ordered locus">stu0643</name>
</gene>
<dbReference type="EMBL" id="CP000023">
    <property type="protein sequence ID" value="AAV60349.1"/>
    <property type="molecule type" value="Genomic_DNA"/>
</dbReference>
<dbReference type="RefSeq" id="WP_002947244.1">
    <property type="nucleotide sequence ID" value="NC_006448.1"/>
</dbReference>
<dbReference type="SMR" id="Q5M553"/>
<dbReference type="STRING" id="264199.stu0643"/>
<dbReference type="KEGG" id="stl:stu0643"/>
<dbReference type="eggNOG" id="COG3679">
    <property type="taxonomic scope" value="Bacteria"/>
</dbReference>
<dbReference type="HOGENOM" id="CLU_140243_2_0_9"/>
<dbReference type="Proteomes" id="UP000001170">
    <property type="component" value="Chromosome"/>
</dbReference>
<dbReference type="Gene3D" id="1.20.1500.10">
    <property type="entry name" value="YheA/YmcA-like"/>
    <property type="match status" value="1"/>
</dbReference>
<dbReference type="HAMAP" id="MF_01526">
    <property type="entry name" value="UPF0342"/>
    <property type="match status" value="1"/>
</dbReference>
<dbReference type="InterPro" id="IPR010368">
    <property type="entry name" value="Com_YlbF"/>
</dbReference>
<dbReference type="InterPro" id="IPR023378">
    <property type="entry name" value="YheA/YmcA-like_dom_sf"/>
</dbReference>
<dbReference type="NCBIfam" id="NF010209">
    <property type="entry name" value="PRK13676.1-1"/>
    <property type="match status" value="1"/>
</dbReference>
<dbReference type="Pfam" id="PF06133">
    <property type="entry name" value="Com_YlbF"/>
    <property type="match status" value="1"/>
</dbReference>
<dbReference type="SUPFAM" id="SSF158622">
    <property type="entry name" value="YheA/YmcA-like"/>
    <property type="match status" value="1"/>
</dbReference>